<dbReference type="EC" id="2.3.1.234" evidence="1"/>
<dbReference type="EMBL" id="CP000805">
    <property type="protein sequence ID" value="ACD71098.1"/>
    <property type="molecule type" value="Genomic_DNA"/>
</dbReference>
<dbReference type="RefSeq" id="WP_010882125.1">
    <property type="nucleotide sequence ID" value="NC_021508.1"/>
</dbReference>
<dbReference type="SMR" id="B2S3R9"/>
<dbReference type="GeneID" id="93876449"/>
<dbReference type="KEGG" id="tpp:TPASS_0680"/>
<dbReference type="PATRIC" id="fig|455434.6.peg.673"/>
<dbReference type="Proteomes" id="UP000001202">
    <property type="component" value="Chromosome"/>
</dbReference>
<dbReference type="GO" id="GO:0005737">
    <property type="term" value="C:cytoplasm"/>
    <property type="evidence" value="ECO:0007669"/>
    <property type="project" value="UniProtKB-SubCell"/>
</dbReference>
<dbReference type="GO" id="GO:0005506">
    <property type="term" value="F:iron ion binding"/>
    <property type="evidence" value="ECO:0007669"/>
    <property type="project" value="UniProtKB-UniRule"/>
</dbReference>
<dbReference type="GO" id="GO:0061711">
    <property type="term" value="F:N(6)-L-threonylcarbamoyladenine synthase activity"/>
    <property type="evidence" value="ECO:0007669"/>
    <property type="project" value="UniProtKB-EC"/>
</dbReference>
<dbReference type="GO" id="GO:0002949">
    <property type="term" value="P:tRNA threonylcarbamoyladenosine modification"/>
    <property type="evidence" value="ECO:0007669"/>
    <property type="project" value="UniProtKB-UniRule"/>
</dbReference>
<dbReference type="CDD" id="cd24133">
    <property type="entry name" value="ASKHA_NBD_TsaD_bac"/>
    <property type="match status" value="1"/>
</dbReference>
<dbReference type="FunFam" id="3.30.420.40:FF:000012">
    <property type="entry name" value="tRNA N6-adenosine threonylcarbamoyltransferase"/>
    <property type="match status" value="1"/>
</dbReference>
<dbReference type="Gene3D" id="3.30.420.40">
    <property type="match status" value="2"/>
</dbReference>
<dbReference type="HAMAP" id="MF_01445">
    <property type="entry name" value="TsaD"/>
    <property type="match status" value="1"/>
</dbReference>
<dbReference type="InterPro" id="IPR043129">
    <property type="entry name" value="ATPase_NBD"/>
</dbReference>
<dbReference type="InterPro" id="IPR000905">
    <property type="entry name" value="Gcp-like_dom"/>
</dbReference>
<dbReference type="InterPro" id="IPR017861">
    <property type="entry name" value="KAE1/TsaD"/>
</dbReference>
<dbReference type="InterPro" id="IPR017860">
    <property type="entry name" value="Peptidase_M22_CS"/>
</dbReference>
<dbReference type="InterPro" id="IPR022450">
    <property type="entry name" value="TsaD"/>
</dbReference>
<dbReference type="NCBIfam" id="TIGR00329">
    <property type="entry name" value="gcp_kae1"/>
    <property type="match status" value="1"/>
</dbReference>
<dbReference type="NCBIfam" id="TIGR03723">
    <property type="entry name" value="T6A_TsaD_YgjD"/>
    <property type="match status" value="1"/>
</dbReference>
<dbReference type="PANTHER" id="PTHR11735">
    <property type="entry name" value="TRNA N6-ADENOSINE THREONYLCARBAMOYLTRANSFERASE"/>
    <property type="match status" value="1"/>
</dbReference>
<dbReference type="PANTHER" id="PTHR11735:SF6">
    <property type="entry name" value="TRNA N6-ADENOSINE THREONYLCARBAMOYLTRANSFERASE, MITOCHONDRIAL"/>
    <property type="match status" value="1"/>
</dbReference>
<dbReference type="Pfam" id="PF00814">
    <property type="entry name" value="TsaD"/>
    <property type="match status" value="1"/>
</dbReference>
<dbReference type="PRINTS" id="PR00789">
    <property type="entry name" value="OSIALOPTASE"/>
</dbReference>
<dbReference type="SUPFAM" id="SSF53067">
    <property type="entry name" value="Actin-like ATPase domain"/>
    <property type="match status" value="1"/>
</dbReference>
<dbReference type="PROSITE" id="PS01016">
    <property type="entry name" value="GLYCOPROTEASE"/>
    <property type="match status" value="1"/>
</dbReference>
<evidence type="ECO:0000255" key="1">
    <source>
        <dbReference type="HAMAP-Rule" id="MF_01445"/>
    </source>
</evidence>
<gene>
    <name evidence="1" type="primary">tsaD</name>
    <name type="synonym">gcp</name>
    <name type="ordered locus">TPASS_0680</name>
</gene>
<feature type="chain" id="PRO_1000146037" description="tRNA N6-adenosine threonylcarbamoyltransferase">
    <location>
        <begin position="1"/>
        <end position="352"/>
    </location>
</feature>
<feature type="binding site" evidence="1">
    <location>
        <position position="111"/>
    </location>
    <ligand>
        <name>Fe cation</name>
        <dbReference type="ChEBI" id="CHEBI:24875"/>
    </ligand>
</feature>
<feature type="binding site" evidence="1">
    <location>
        <position position="115"/>
    </location>
    <ligand>
        <name>Fe cation</name>
        <dbReference type="ChEBI" id="CHEBI:24875"/>
    </ligand>
</feature>
<feature type="binding site" evidence="1">
    <location>
        <begin position="133"/>
        <end position="137"/>
    </location>
    <ligand>
        <name>substrate</name>
    </ligand>
</feature>
<feature type="binding site" evidence="1">
    <location>
        <position position="166"/>
    </location>
    <ligand>
        <name>substrate</name>
    </ligand>
</feature>
<feature type="binding site" evidence="1">
    <location>
        <position position="179"/>
    </location>
    <ligand>
        <name>substrate</name>
    </ligand>
</feature>
<feature type="binding site" evidence="1">
    <location>
        <position position="275"/>
    </location>
    <ligand>
        <name>substrate</name>
    </ligand>
</feature>
<feature type="binding site" evidence="1">
    <location>
        <position position="300"/>
    </location>
    <ligand>
        <name>Fe cation</name>
        <dbReference type="ChEBI" id="CHEBI:24875"/>
    </ligand>
</feature>
<keyword id="KW-0012">Acyltransferase</keyword>
<keyword id="KW-0963">Cytoplasm</keyword>
<keyword id="KW-0408">Iron</keyword>
<keyword id="KW-0479">Metal-binding</keyword>
<keyword id="KW-0808">Transferase</keyword>
<keyword id="KW-0819">tRNA processing</keyword>
<name>TSAD_TREPS</name>
<accession>B2S3R9</accession>
<sequence>MNVLGIETSCDETAVAIVKDGTHVCSNVVATQIPFHAPYRGIVPELASRKHIEWILPTVKEALARAQLTLADIDGIAVTHAPGLTGSLLVGLTFAKTLAWSMHLPFIAVNHLHAHFCAAHVEHDLAYPYVGLLASGGHALVCVVHDFDQVEALGATIDDAPGEAFDKVAAFYGFGYPGGKVIETLAEQGDARAARFPLPHFHGKGHRYDVSYSGLKTAVIHQLDHFWNKEYERTAQNIAAAFQACAINILLRPLARALQDTGLPTAVVCGGVAANSLLRKSVADWKHARCVFPSREYCTDNAVMVAALGYRYLIRGDRSFYGVTERSRIAHFSKRGGDRLAAQRSAASQPLF</sequence>
<organism>
    <name type="scientific">Treponema pallidum subsp. pallidum (strain SS14)</name>
    <dbReference type="NCBI Taxonomy" id="455434"/>
    <lineage>
        <taxon>Bacteria</taxon>
        <taxon>Pseudomonadati</taxon>
        <taxon>Spirochaetota</taxon>
        <taxon>Spirochaetia</taxon>
        <taxon>Spirochaetales</taxon>
        <taxon>Treponemataceae</taxon>
        <taxon>Treponema</taxon>
    </lineage>
</organism>
<comment type="function">
    <text evidence="1">Required for the formation of a threonylcarbamoyl group on adenosine at position 37 (t(6)A37) in tRNAs that read codons beginning with adenine. Is involved in the transfer of the threonylcarbamoyl moiety of threonylcarbamoyl-AMP (TC-AMP) to the N6 group of A37, together with TsaE and TsaB. TsaD likely plays a direct catalytic role in this reaction.</text>
</comment>
<comment type="catalytic activity">
    <reaction evidence="1">
        <text>L-threonylcarbamoyladenylate + adenosine(37) in tRNA = N(6)-L-threonylcarbamoyladenosine(37) in tRNA + AMP + H(+)</text>
        <dbReference type="Rhea" id="RHEA:37059"/>
        <dbReference type="Rhea" id="RHEA-COMP:10162"/>
        <dbReference type="Rhea" id="RHEA-COMP:10163"/>
        <dbReference type="ChEBI" id="CHEBI:15378"/>
        <dbReference type="ChEBI" id="CHEBI:73682"/>
        <dbReference type="ChEBI" id="CHEBI:74411"/>
        <dbReference type="ChEBI" id="CHEBI:74418"/>
        <dbReference type="ChEBI" id="CHEBI:456215"/>
        <dbReference type="EC" id="2.3.1.234"/>
    </reaction>
</comment>
<comment type="cofactor">
    <cofactor evidence="1">
        <name>Fe(2+)</name>
        <dbReference type="ChEBI" id="CHEBI:29033"/>
    </cofactor>
    <text evidence="1">Binds 1 Fe(2+) ion per subunit.</text>
</comment>
<comment type="subcellular location">
    <subcellularLocation>
        <location evidence="1">Cytoplasm</location>
    </subcellularLocation>
</comment>
<comment type="similarity">
    <text evidence="1">Belongs to the KAE1 / TsaD family.</text>
</comment>
<proteinExistence type="inferred from homology"/>
<protein>
    <recommendedName>
        <fullName evidence="1">tRNA N6-adenosine threonylcarbamoyltransferase</fullName>
        <ecNumber evidence="1">2.3.1.234</ecNumber>
    </recommendedName>
    <alternativeName>
        <fullName evidence="1">N6-L-threonylcarbamoyladenine synthase</fullName>
        <shortName evidence="1">t(6)A synthase</shortName>
    </alternativeName>
    <alternativeName>
        <fullName evidence="1">t(6)A37 threonylcarbamoyladenosine biosynthesis protein TsaD</fullName>
    </alternativeName>
    <alternativeName>
        <fullName evidence="1">tRNA threonylcarbamoyladenosine biosynthesis protein TsaD</fullName>
    </alternativeName>
</protein>
<reference key="1">
    <citation type="journal article" date="2008" name="BMC Microbiol.">
        <title>Complete genome sequence of Treponema pallidum ssp. pallidum strain SS14 determined with oligonucleotide arrays.</title>
        <authorList>
            <person name="Matejkova P."/>
            <person name="Strouhal M."/>
            <person name="Smajs D."/>
            <person name="Norris S.J."/>
            <person name="Palzkill T."/>
            <person name="Petrosino J.F."/>
            <person name="Sodergren E."/>
            <person name="Norton J.E."/>
            <person name="Singh J."/>
            <person name="Richmond T.A."/>
            <person name="Molla M.N."/>
            <person name="Albert T.J."/>
            <person name="Weinstock G.M."/>
        </authorList>
    </citation>
    <scope>NUCLEOTIDE SEQUENCE [LARGE SCALE GENOMIC DNA]</scope>
    <source>
        <strain>SS14</strain>
    </source>
</reference>